<name>ENPL_RABIT</name>
<keyword id="KW-0007">Acetylation</keyword>
<keyword id="KW-0067">ATP-binding</keyword>
<keyword id="KW-0106">Calcium</keyword>
<keyword id="KW-0143">Chaperone</keyword>
<keyword id="KW-1015">Disulfide bond</keyword>
<keyword id="KW-0256">Endoplasmic reticulum</keyword>
<keyword id="KW-0325">Glycoprotein</keyword>
<keyword id="KW-0378">Hydrolase</keyword>
<keyword id="KW-0379">Hydroxylation</keyword>
<keyword id="KW-0547">Nucleotide-binding</keyword>
<keyword id="KW-0597">Phosphoprotein</keyword>
<keyword id="KW-1185">Reference proteome</keyword>
<keyword id="KW-0703">Sarcoplasmic reticulum</keyword>
<keyword id="KW-0732">Signal</keyword>
<reference key="1">
    <citation type="journal article" date="2011" name="Nature">
        <title>A high-resolution map of human evolutionary constraint using 29 mammals.</title>
        <authorList>
            <person name="Lindblad-Toh K."/>
            <person name="Garber M."/>
            <person name="Zuk O."/>
            <person name="Lin M.F."/>
            <person name="Parker B.J."/>
            <person name="Washietl S."/>
            <person name="Kheradpour P."/>
            <person name="Ernst J."/>
            <person name="Jordan G."/>
            <person name="Mauceli E."/>
            <person name="Ward L.D."/>
            <person name="Lowe C.B."/>
            <person name="Holloway A.K."/>
            <person name="Clamp M."/>
            <person name="Gnerre S."/>
            <person name="Alfoldi J."/>
            <person name="Beal K."/>
            <person name="Chang J."/>
            <person name="Clawson H."/>
            <person name="Cuff J."/>
            <person name="Di Palma F."/>
            <person name="Fitzgerald S."/>
            <person name="Flicek P."/>
            <person name="Guttman M."/>
            <person name="Hubisz M.J."/>
            <person name="Jaffe D.B."/>
            <person name="Jungreis I."/>
            <person name="Kent W.J."/>
            <person name="Kostka D."/>
            <person name="Lara M."/>
            <person name="Martins A.L."/>
            <person name="Massingham T."/>
            <person name="Moltke I."/>
            <person name="Raney B.J."/>
            <person name="Rasmussen M.D."/>
            <person name="Robinson J."/>
            <person name="Stark A."/>
            <person name="Vilella A.J."/>
            <person name="Wen J."/>
            <person name="Xie X."/>
            <person name="Zody M.C."/>
            <person name="Baldwin J."/>
            <person name="Bloom T."/>
            <person name="Chin C.W."/>
            <person name="Heiman D."/>
            <person name="Nicol R."/>
            <person name="Nusbaum C."/>
            <person name="Young S."/>
            <person name="Wilkinson J."/>
            <person name="Worley K.C."/>
            <person name="Kovar C.L."/>
            <person name="Muzny D.M."/>
            <person name="Gibbs R.A."/>
            <person name="Cree A."/>
            <person name="Dihn H.H."/>
            <person name="Fowler G."/>
            <person name="Jhangiani S."/>
            <person name="Joshi V."/>
            <person name="Lee S."/>
            <person name="Lewis L.R."/>
            <person name="Nazareth L.V."/>
            <person name="Okwuonu G."/>
            <person name="Santibanez J."/>
            <person name="Warren W.C."/>
            <person name="Mardis E.R."/>
            <person name="Weinstock G.M."/>
            <person name="Wilson R.K."/>
            <person name="Delehaunty K."/>
            <person name="Dooling D."/>
            <person name="Fronik C."/>
            <person name="Fulton L."/>
            <person name="Fulton B."/>
            <person name="Graves T."/>
            <person name="Minx P."/>
            <person name="Sodergren E."/>
            <person name="Birney E."/>
            <person name="Margulies E.H."/>
            <person name="Herrero J."/>
            <person name="Green E.D."/>
            <person name="Haussler D."/>
            <person name="Siepel A."/>
            <person name="Goldman N."/>
            <person name="Pollard K.S."/>
            <person name="Pedersen J.S."/>
            <person name="Lander E.S."/>
            <person name="Kellis M."/>
        </authorList>
    </citation>
    <scope>NUCLEOTIDE SEQUENCE [LARGE SCALE GENOMIC DNA]</scope>
</reference>
<reference key="2">
    <citation type="journal article" date="1998" name="Biochem. J.">
        <title>Rabbit cardiac and skeletal myocytes differ in constitutive and inducible expression of the glucose-regulated protein GRP94.</title>
        <authorList>
            <person name="Vitadello M."/>
            <person name="Colpo P."/>
            <person name="Gorza L."/>
        </authorList>
    </citation>
    <scope>NUCLEOTIDE SEQUENCE [MRNA] OF 159-802</scope>
    <scope>TISSUE SPECIFICITY</scope>
    <source>
        <strain>New Zealand white</strain>
    </source>
</reference>
<proteinExistence type="evidence at transcript level"/>
<evidence type="ECO:0000250" key="1">
    <source>
        <dbReference type="UniProtKB" id="P08113"/>
    </source>
</evidence>
<evidence type="ECO:0000250" key="2">
    <source>
        <dbReference type="UniProtKB" id="P14625"/>
    </source>
</evidence>
<evidence type="ECO:0000250" key="3">
    <source>
        <dbReference type="UniProtKB" id="P41148"/>
    </source>
</evidence>
<evidence type="ECO:0000250" key="4">
    <source>
        <dbReference type="UniProtKB" id="Q66HD0"/>
    </source>
</evidence>
<evidence type="ECO:0000256" key="5">
    <source>
        <dbReference type="SAM" id="MobiDB-lite"/>
    </source>
</evidence>
<evidence type="ECO:0000303" key="6">
    <source>
    </source>
</evidence>
<evidence type="ECO:0000305" key="7"/>
<accession>O18750</accession>
<accession>G1TBC1</accession>
<dbReference type="EC" id="3.6.4.-" evidence="3"/>
<dbReference type="EMBL" id="AAGW02034046">
    <property type="status" value="NOT_ANNOTATED_CDS"/>
    <property type="molecule type" value="Genomic_DNA"/>
</dbReference>
<dbReference type="EMBL" id="AF001631">
    <property type="protein sequence ID" value="AAC48853.1"/>
    <property type="molecule type" value="mRNA"/>
</dbReference>
<dbReference type="RefSeq" id="XP_008255217.1">
    <property type="nucleotide sequence ID" value="XM_008256995.2"/>
</dbReference>
<dbReference type="RefSeq" id="XP_051701800.1">
    <property type="nucleotide sequence ID" value="XM_051845840.2"/>
</dbReference>
<dbReference type="SMR" id="O18750"/>
<dbReference type="STRING" id="9986.ENSOCUP00000014008"/>
<dbReference type="GlyCosmos" id="O18750">
    <property type="glycosylation" value="4 sites, No reported glycans"/>
</dbReference>
<dbReference type="PaxDb" id="9986-ENSOCUP00000014008"/>
<dbReference type="Ensembl" id="ENSOCUT00000016294.3">
    <property type="protein sequence ID" value="ENSOCUP00000014008.3"/>
    <property type="gene ID" value="ENSOCUG00000016288.3"/>
</dbReference>
<dbReference type="GeneID" id="100009456"/>
<dbReference type="eggNOG" id="KOG0020">
    <property type="taxonomic scope" value="Eukaryota"/>
</dbReference>
<dbReference type="GeneTree" id="ENSGT01020000230401"/>
<dbReference type="InParanoid" id="O18750"/>
<dbReference type="Proteomes" id="UP000001811">
    <property type="component" value="Chromosome 4"/>
</dbReference>
<dbReference type="GO" id="GO:0005829">
    <property type="term" value="C:cytosol"/>
    <property type="evidence" value="ECO:0007669"/>
    <property type="project" value="Ensembl"/>
</dbReference>
<dbReference type="GO" id="GO:0005788">
    <property type="term" value="C:endoplasmic reticulum lumen"/>
    <property type="evidence" value="ECO:0007669"/>
    <property type="project" value="Ensembl"/>
</dbReference>
<dbReference type="GO" id="GO:0005789">
    <property type="term" value="C:endoplasmic reticulum membrane"/>
    <property type="evidence" value="ECO:0007669"/>
    <property type="project" value="Ensembl"/>
</dbReference>
<dbReference type="GO" id="GO:0042470">
    <property type="term" value="C:melanosome"/>
    <property type="evidence" value="ECO:0007669"/>
    <property type="project" value="UniProtKB-SubCell"/>
</dbReference>
<dbReference type="GO" id="GO:0030496">
    <property type="term" value="C:midbody"/>
    <property type="evidence" value="ECO:0007669"/>
    <property type="project" value="Ensembl"/>
</dbReference>
<dbReference type="GO" id="GO:0048471">
    <property type="term" value="C:perinuclear region of cytoplasm"/>
    <property type="evidence" value="ECO:0007669"/>
    <property type="project" value="Ensembl"/>
</dbReference>
<dbReference type="GO" id="GO:0032991">
    <property type="term" value="C:protein-containing complex"/>
    <property type="evidence" value="ECO:0007669"/>
    <property type="project" value="Ensembl"/>
</dbReference>
<dbReference type="GO" id="GO:0033018">
    <property type="term" value="C:sarcoplasmic reticulum lumen"/>
    <property type="evidence" value="ECO:0007669"/>
    <property type="project" value="UniProtKB-SubCell"/>
</dbReference>
<dbReference type="GO" id="GO:0005524">
    <property type="term" value="F:ATP binding"/>
    <property type="evidence" value="ECO:0007669"/>
    <property type="project" value="UniProtKB-KW"/>
</dbReference>
<dbReference type="GO" id="GO:0016887">
    <property type="term" value="F:ATP hydrolysis activity"/>
    <property type="evidence" value="ECO:0007669"/>
    <property type="project" value="InterPro"/>
</dbReference>
<dbReference type="GO" id="GO:0140662">
    <property type="term" value="F:ATP-dependent protein folding chaperone"/>
    <property type="evidence" value="ECO:0007669"/>
    <property type="project" value="Ensembl"/>
</dbReference>
<dbReference type="GO" id="GO:0050750">
    <property type="term" value="F:low-density lipoprotein particle receptor binding"/>
    <property type="evidence" value="ECO:0007669"/>
    <property type="project" value="Ensembl"/>
</dbReference>
<dbReference type="GO" id="GO:0019903">
    <property type="term" value="F:protein phosphatase binding"/>
    <property type="evidence" value="ECO:0007669"/>
    <property type="project" value="Ensembl"/>
</dbReference>
<dbReference type="GO" id="GO:0004864">
    <property type="term" value="F:protein phosphatase inhibitor activity"/>
    <property type="evidence" value="ECO:0007669"/>
    <property type="project" value="Ensembl"/>
</dbReference>
<dbReference type="GO" id="GO:0003723">
    <property type="term" value="F:RNA binding"/>
    <property type="evidence" value="ECO:0007669"/>
    <property type="project" value="Ensembl"/>
</dbReference>
<dbReference type="GO" id="GO:0051082">
    <property type="term" value="F:unfolded protein binding"/>
    <property type="evidence" value="ECO:0007669"/>
    <property type="project" value="InterPro"/>
</dbReference>
<dbReference type="GO" id="GO:0031247">
    <property type="term" value="P:actin rod assembly"/>
    <property type="evidence" value="ECO:0007669"/>
    <property type="project" value="Ensembl"/>
</dbReference>
<dbReference type="GO" id="GO:0071318">
    <property type="term" value="P:cellular response to ATP"/>
    <property type="evidence" value="ECO:0007669"/>
    <property type="project" value="Ensembl"/>
</dbReference>
<dbReference type="GO" id="GO:0036503">
    <property type="term" value="P:ERAD pathway"/>
    <property type="evidence" value="ECO:0000250"/>
    <property type="project" value="UniProtKB"/>
</dbReference>
<dbReference type="GO" id="GO:0043066">
    <property type="term" value="P:negative regulation of apoptotic process"/>
    <property type="evidence" value="ECO:0007669"/>
    <property type="project" value="Ensembl"/>
</dbReference>
<dbReference type="GO" id="GO:0034123">
    <property type="term" value="P:positive regulation of toll-like receptor signaling pathway"/>
    <property type="evidence" value="ECO:0007669"/>
    <property type="project" value="Ensembl"/>
</dbReference>
<dbReference type="GO" id="GO:0030177">
    <property type="term" value="P:positive regulation of Wnt signaling pathway"/>
    <property type="evidence" value="ECO:0007669"/>
    <property type="project" value="Ensembl"/>
</dbReference>
<dbReference type="GO" id="GO:0072659">
    <property type="term" value="P:protein localization to plasma membrane"/>
    <property type="evidence" value="ECO:0007669"/>
    <property type="project" value="Ensembl"/>
</dbReference>
<dbReference type="GO" id="GO:0001666">
    <property type="term" value="P:response to hypoxia"/>
    <property type="evidence" value="ECO:0007669"/>
    <property type="project" value="Ensembl"/>
</dbReference>
<dbReference type="GO" id="GO:0030970">
    <property type="term" value="P:retrograde protein transport, ER to cytosol"/>
    <property type="evidence" value="ECO:0007669"/>
    <property type="project" value="Ensembl"/>
</dbReference>
<dbReference type="CDD" id="cd16927">
    <property type="entry name" value="HATPase_Hsp90-like"/>
    <property type="match status" value="1"/>
</dbReference>
<dbReference type="FunFam" id="3.30.230.80:FF:000003">
    <property type="entry name" value="endoplasmin isoform X1"/>
    <property type="match status" value="1"/>
</dbReference>
<dbReference type="FunFam" id="1.20.120.790:FF:000003">
    <property type="entry name" value="Heat shock protein 90"/>
    <property type="match status" value="1"/>
</dbReference>
<dbReference type="FunFam" id="3.30.565.10:FF:000005">
    <property type="entry name" value="Heat shock protein 90"/>
    <property type="match status" value="1"/>
</dbReference>
<dbReference type="FunFam" id="3.40.50.11260:FF:000003">
    <property type="entry name" value="Heat shock protein 90"/>
    <property type="match status" value="1"/>
</dbReference>
<dbReference type="Gene3D" id="3.30.230.80">
    <property type="match status" value="1"/>
</dbReference>
<dbReference type="Gene3D" id="3.40.50.11260">
    <property type="match status" value="1"/>
</dbReference>
<dbReference type="Gene3D" id="1.20.120.790">
    <property type="entry name" value="Heat shock protein 90, C-terminal domain"/>
    <property type="match status" value="1"/>
</dbReference>
<dbReference type="Gene3D" id="3.30.565.10">
    <property type="entry name" value="Histidine kinase-like ATPase, C-terminal domain"/>
    <property type="match status" value="1"/>
</dbReference>
<dbReference type="HAMAP" id="MF_00505">
    <property type="entry name" value="HSP90"/>
    <property type="match status" value="1"/>
</dbReference>
<dbReference type="InterPro" id="IPR036890">
    <property type="entry name" value="HATPase_C_sf"/>
</dbReference>
<dbReference type="InterPro" id="IPR019805">
    <property type="entry name" value="Heat_shock_protein_90_CS"/>
</dbReference>
<dbReference type="InterPro" id="IPR037196">
    <property type="entry name" value="HSP90_C"/>
</dbReference>
<dbReference type="InterPro" id="IPR001404">
    <property type="entry name" value="Hsp90_fam"/>
</dbReference>
<dbReference type="InterPro" id="IPR020575">
    <property type="entry name" value="Hsp90_N"/>
</dbReference>
<dbReference type="InterPro" id="IPR020568">
    <property type="entry name" value="Ribosomal_Su5_D2-typ_SF"/>
</dbReference>
<dbReference type="NCBIfam" id="NF003555">
    <property type="entry name" value="PRK05218.1"/>
    <property type="match status" value="1"/>
</dbReference>
<dbReference type="PANTHER" id="PTHR11528">
    <property type="entry name" value="HEAT SHOCK PROTEIN 90 FAMILY MEMBER"/>
    <property type="match status" value="1"/>
</dbReference>
<dbReference type="Pfam" id="PF13589">
    <property type="entry name" value="HATPase_c_3"/>
    <property type="match status" value="1"/>
</dbReference>
<dbReference type="Pfam" id="PF00183">
    <property type="entry name" value="HSP90"/>
    <property type="match status" value="1"/>
</dbReference>
<dbReference type="PIRSF" id="PIRSF002583">
    <property type="entry name" value="Hsp90"/>
    <property type="match status" value="1"/>
</dbReference>
<dbReference type="PRINTS" id="PR00775">
    <property type="entry name" value="HEATSHOCK90"/>
</dbReference>
<dbReference type="SMART" id="SM00387">
    <property type="entry name" value="HATPase_c"/>
    <property type="match status" value="1"/>
</dbReference>
<dbReference type="SUPFAM" id="SSF55874">
    <property type="entry name" value="ATPase domain of HSP90 chaperone/DNA topoisomerase II/histidine kinase"/>
    <property type="match status" value="1"/>
</dbReference>
<dbReference type="SUPFAM" id="SSF110942">
    <property type="entry name" value="HSP90 C-terminal domain"/>
    <property type="match status" value="1"/>
</dbReference>
<dbReference type="SUPFAM" id="SSF54211">
    <property type="entry name" value="Ribosomal protein S5 domain 2-like"/>
    <property type="match status" value="1"/>
</dbReference>
<dbReference type="PROSITE" id="PS00014">
    <property type="entry name" value="ER_TARGET"/>
    <property type="match status" value="1"/>
</dbReference>
<dbReference type="PROSITE" id="PS00298">
    <property type="entry name" value="HSP90"/>
    <property type="match status" value="1"/>
</dbReference>
<feature type="signal peptide" evidence="2">
    <location>
        <begin position="1"/>
        <end position="21"/>
    </location>
</feature>
<feature type="chain" id="PRO_0000062927" description="Endoplasmin">
    <location>
        <begin position="22"/>
        <end position="802"/>
    </location>
</feature>
<feature type="region of interest" description="Disordered" evidence="5">
    <location>
        <begin position="288"/>
        <end position="323"/>
    </location>
</feature>
<feature type="region of interest" description="Disordered" evidence="5">
    <location>
        <begin position="750"/>
        <end position="802"/>
    </location>
</feature>
<feature type="short sequence motif" description="SRT pseudosubstrate motif" evidence="2">
    <location>
        <begin position="42"/>
        <end position="44"/>
    </location>
</feature>
<feature type="short sequence motif" description="Prevents secretion from ER" evidence="2">
    <location>
        <begin position="799"/>
        <end position="802"/>
    </location>
</feature>
<feature type="compositionally biased region" description="Acidic residues" evidence="5">
    <location>
        <begin position="289"/>
        <end position="317"/>
    </location>
</feature>
<feature type="compositionally biased region" description="Acidic residues" evidence="5">
    <location>
        <begin position="757"/>
        <end position="789"/>
    </location>
</feature>
<feature type="compositionally biased region" description="Basic and acidic residues" evidence="5">
    <location>
        <begin position="790"/>
        <end position="802"/>
    </location>
</feature>
<feature type="binding site" evidence="3">
    <location>
        <position position="107"/>
    </location>
    <ligand>
        <name>ATP</name>
        <dbReference type="ChEBI" id="CHEBI:30616"/>
    </ligand>
</feature>
<feature type="binding site" evidence="3">
    <location>
        <position position="149"/>
    </location>
    <ligand>
        <name>ATP</name>
        <dbReference type="ChEBI" id="CHEBI:30616"/>
    </ligand>
</feature>
<feature type="binding site" evidence="3">
    <location>
        <position position="162"/>
    </location>
    <ligand>
        <name>ATP</name>
        <dbReference type="ChEBI" id="CHEBI:30616"/>
    </ligand>
</feature>
<feature type="binding site" evidence="3">
    <location>
        <position position="199"/>
    </location>
    <ligand>
        <name>ATP</name>
        <dbReference type="ChEBI" id="CHEBI:30616"/>
    </ligand>
</feature>
<feature type="site" description="Important for ATP hydrolysis" evidence="3">
    <location>
        <position position="448"/>
    </location>
</feature>
<feature type="modified residue" description="Phosphoserine" evidence="2">
    <location>
        <position position="64"/>
    </location>
</feature>
<feature type="modified residue" description="N6-(2-hydroxyisobutyryl)lysine" evidence="2">
    <location>
        <position position="168"/>
    </location>
</feature>
<feature type="modified residue" description="Phosphoserine" evidence="4">
    <location>
        <position position="172"/>
    </location>
</feature>
<feature type="modified residue" description="Phosphoserine" evidence="4">
    <location>
        <position position="403"/>
    </location>
</feature>
<feature type="modified residue" description="N6-succinyllysine" evidence="1">
    <location>
        <position position="404"/>
    </location>
</feature>
<feature type="modified residue" description="Phosphoserine" evidence="2">
    <location>
        <position position="447"/>
    </location>
</feature>
<feature type="modified residue" description="N6-acetyllysine" evidence="1">
    <location>
        <position position="479"/>
    </location>
</feature>
<feature type="modified residue" description="N6-succinyllysine" evidence="1">
    <location>
        <position position="633"/>
    </location>
</feature>
<feature type="modified residue" description="Phosphothreonine" evidence="2">
    <location>
        <position position="782"/>
    </location>
</feature>
<feature type="glycosylation site" description="N-linked (GlcNAc...) asparagine" evidence="2">
    <location>
        <position position="62"/>
    </location>
</feature>
<feature type="glycosylation site" description="N-linked (GlcNAc...) asparagine" evidence="2">
    <location>
        <position position="107"/>
    </location>
</feature>
<feature type="glycosylation site" description="N-linked (GlcNAc...) asparagine" evidence="2">
    <location>
        <position position="217"/>
    </location>
</feature>
<feature type="glycosylation site" description="N-linked (GlcNAc...) asparagine" evidence="2">
    <location>
        <position position="445"/>
    </location>
</feature>
<feature type="glycosylation site" description="N-linked (GlcNAc...) asparagine" evidence="2">
    <location>
        <position position="481"/>
    </location>
</feature>
<feature type="glycosylation site" description="N-linked (GlcNAc...) asparagine" evidence="2">
    <location>
        <position position="502"/>
    </location>
</feature>
<feature type="disulfide bond" description="Interchain" evidence="1">
    <location>
        <position position="138"/>
    </location>
</feature>
<sequence length="802" mass="92391">MRALWVLGLCCVLLTFGSARADDEVDVDGTVEEDLGKSREGSRTDDEVVQREEEAIQLDGLNASQIRELREKSEKFAFQAEVNRMMKLIINSLYKNKEIFLRELISNASDALDKIRLISLTDEQALSGNEELTVKIKCDKEKNLLHVTDTGVGMTREELVKNLGTIAKSGTSEFLNKMTEAQEDGQSTSELIGQFGVGFYSAFLVADKVIVTSKHNNDTQHIWESDSNEFSVIADPRGNTLGRGTTITLVLKEEASDYLELDTIKNLVKKYSQFINFPIYVWSSKTETVEEPAEEEEAAKEEKEEADDEAAVEEEEEEKKPKTKKVEKTVWDWELMNDIKPIWQRPSKEVEEDEYKAFYKSFSKESDDPMAYIHFTAEGEVTFKSILFVPTSAPRGLFDEYGSKKSDYIKLYVRRVFITDDFHDMMPKYLNFVKGVVDSDDLPLNVSRETLQQHKLLKVIRKKLVRKTLDMIKKIADEKYNDTFWKEFGTNIKLGVIEDHSNRTRLAKLLRFQSSHHPTDITSLDQYVERMKEKQDKIYFMAGASRKEAESSPFVERLLKKGYEVIYLTEPVDEYCIQALPEFDGKRFQNVAKEGVKFDESEKTKESREATEKEFEPLLNWMKDKALKDKIEKAVVSQRLTESPCALVASQYGWSGNMERIMKAQAYQTGKDISTNYYASQKKTFEINPRHPLIRDMLRRIKEDEDDKTVMDLAVVLFETATLRSGYLLPDTKAYGDRIERMLRLSLNIDPDAKVEEEPEEEPEDTTEDTEQDEEEEMDAGTDEEEQEQEPEKKSTAEKDEL</sequence>
<organism>
    <name type="scientific">Oryctolagus cuniculus</name>
    <name type="common">Rabbit</name>
    <dbReference type="NCBI Taxonomy" id="9986"/>
    <lineage>
        <taxon>Eukaryota</taxon>
        <taxon>Metazoa</taxon>
        <taxon>Chordata</taxon>
        <taxon>Craniata</taxon>
        <taxon>Vertebrata</taxon>
        <taxon>Euteleostomi</taxon>
        <taxon>Mammalia</taxon>
        <taxon>Eutheria</taxon>
        <taxon>Euarchontoglires</taxon>
        <taxon>Glires</taxon>
        <taxon>Lagomorpha</taxon>
        <taxon>Leporidae</taxon>
        <taxon>Oryctolagus</taxon>
    </lineage>
</organism>
<protein>
    <recommendedName>
        <fullName>Endoplasmin</fullName>
        <ecNumber evidence="3">3.6.4.-</ecNumber>
    </recommendedName>
    <alternativeName>
        <fullName>94 kDa glucose-regulated protein</fullName>
        <shortName>GRP-94</shortName>
    </alternativeName>
    <alternativeName>
        <fullName>Heat shock protein 90 kDa beta member 1</fullName>
    </alternativeName>
</protein>
<comment type="function">
    <text evidence="1 2">ATP-dependent chaperone involved in the processing of proteins in the endoplasmic reticulum, regulating their transport. Together with MESD, acts as a modulator of the Wnt pathway by promoting the folding of LRP6, a coreceptor of the canonical Wnt pathway (By similarity). When associated with CNPY3, required for proper folding of Toll-like receptors (By similarity). Promotes folding and trafficking of TLR4 to the cell surface. May participate in the unfolding of cytosolic leaderless cargos (lacking the secretion signal sequence) such as the interleukin 1/IL-1 to facilitate their translocation into the ERGIC (endoplasmic reticulum-Golgi intermediate compartment) and secretion; the translocation process is mediated by the cargo receptor TMED10 (By similarity).</text>
</comment>
<comment type="catalytic activity">
    <reaction evidence="3">
        <text>ATP + H2O = ADP + phosphate + H(+)</text>
        <dbReference type="Rhea" id="RHEA:13065"/>
        <dbReference type="ChEBI" id="CHEBI:15377"/>
        <dbReference type="ChEBI" id="CHEBI:15378"/>
        <dbReference type="ChEBI" id="CHEBI:30616"/>
        <dbReference type="ChEBI" id="CHEBI:43474"/>
        <dbReference type="ChEBI" id="CHEBI:456216"/>
    </reaction>
    <physiologicalReaction direction="left-to-right" evidence="3">
        <dbReference type="Rhea" id="RHEA:13066"/>
    </physiologicalReaction>
</comment>
<comment type="subunit">
    <text evidence="1 2">Homodimer; disulfide-linked. Component of an EIF2 complex at least composed of CELF1/CUGBP1, CALR, CALR3, EIF2S1, EIF2S2, HSP90B1 and HSPA5 (By similarity). Part of a large chaperone multiprotein complex comprising DNAJB11, HSP90B1, HSPA5, HYOU, PDIA2, PDIA4, PDIA6, PPIB, SDF2L1, UGGT1 and very small amounts of ERP29, but not, or at very low levels, CALR nor CANX. Interacts with AIMP1; regulates its retention in the endoplasmic reticulum. Hyperglycosylated form interacts with OS9; promoting its degradation by the endoplasmic reticulum associated degradation (ERAD) (By similarity). Interacts with CNPY3. This interaction is disrupted in the presence of ATP (By similarity). Interacts with TLR4 and TLR9, but not with TLR3 (By similarity). Interacts with MZB1 in a calcium-dependent manner (By similarity). Interacts with METTL23. Interacts with IL1B; the interaction facilitates cargo translocation into the ERGIC. Interacts with EIF2AK3 (By similarity).</text>
</comment>
<comment type="subcellular location">
    <subcellularLocation>
        <location evidence="2">Endoplasmic reticulum lumen</location>
    </subcellularLocation>
    <subcellularLocation>
        <location evidence="3">Sarcoplasmic reticulum lumen</location>
    </subcellularLocation>
    <subcellularLocation>
        <location evidence="2">Melanosome</location>
    </subcellularLocation>
</comment>
<comment type="domain">
    <text evidence="2">The SRT pseudosubstrate motif associates with STT3A during translation in normal conditions, preventing glycosylation of facultative sites until HSP90B1 folding is completed.</text>
</comment>
<comment type="PTM">
    <text evidence="3">Phosphorylated by CK2.</text>
</comment>
<comment type="PTM">
    <text evidence="2">N-glycosylated cotranslationally at Asn-217 by STT3A-containing OST-A complex: this glycosylation is constitutive. In response to various stress, 5 additional facultative sites (Asn-62, Asn-107, Asn-445, Asn-481 and Asn-502) can be glycosylated post-translationally by STT3B-containing OST-B complex, leading to a hyperglycosylated form that is degraded by the ER-associated degradation (ERAD) pathway. In normal conditions, the OST-A complex together with CCDC134 prevent glycosylation at facultative sites during protein folding, thereby preventing hyperglycosylation. Mechanistically, nascent HSP90B1 is tethered during translation to a specialized CCDC134-containing translocon that forms a microenvironment for its folding, in which STT3A associates with the SRT pseudosubstrate motif, and prevents access to facultative glycosylation sites until folding is completed, rendering its facultative sites inaccessible to the OST-B complex.</text>
</comment>
<comment type="similarity">
    <text evidence="7">Belongs to the heat shock protein 90 family.</text>
</comment>
<gene>
    <name type="primary">HSP90B1</name>
    <name evidence="6" type="synonym">GRP94</name>
    <name evidence="2" type="synonym">HSPC4</name>
</gene>